<dbReference type="EMBL" id="U37460">
    <property type="protein sequence ID" value="AAA80545.1"/>
    <property type="molecule type" value="Genomic_DNA"/>
</dbReference>
<dbReference type="EMBL" id="U30796">
    <property type="protein sequence ID" value="AAA93250.1"/>
    <property type="molecule type" value="Genomic_DNA"/>
</dbReference>
<dbReference type="EMBL" id="Z75276">
    <property type="protein sequence ID" value="CAA99699.1"/>
    <property type="molecule type" value="Genomic_DNA"/>
</dbReference>
<dbReference type="EMBL" id="BK006948">
    <property type="protein sequence ID" value="DAA11127.1"/>
    <property type="molecule type" value="Genomic_DNA"/>
</dbReference>
<dbReference type="PIR" id="S59670">
    <property type="entry name" value="S59670"/>
</dbReference>
<dbReference type="RefSeq" id="NP_015013.1">
    <property type="nucleotide sequence ID" value="NM_001183788.1"/>
</dbReference>
<dbReference type="PDB" id="7SGZ">
    <property type="method" value="EM"/>
    <property type="resolution" value="3.17 A"/>
    <property type="chains" value="G=1-401"/>
</dbReference>
<dbReference type="PDB" id="7SH2">
    <property type="method" value="EM"/>
    <property type="resolution" value="3.23 A"/>
    <property type="chains" value="G=1-401"/>
</dbReference>
<dbReference type="PDB" id="7ST9">
    <property type="method" value="EM"/>
    <property type="resolution" value="2.20 A"/>
    <property type="chains" value="F=1-401"/>
</dbReference>
<dbReference type="PDB" id="7STB">
    <property type="method" value="EM"/>
    <property type="resolution" value="2.72 A"/>
    <property type="chains" value="F=1-401"/>
</dbReference>
<dbReference type="PDB" id="8DQW">
    <property type="method" value="EM"/>
    <property type="resolution" value="2.10 A"/>
    <property type="chains" value="F=1-401"/>
</dbReference>
<dbReference type="PDB" id="8FS3">
    <property type="method" value="EM"/>
    <property type="resolution" value="2.93 A"/>
    <property type="chains" value="G=1-401"/>
</dbReference>
<dbReference type="PDB" id="8FS4">
    <property type="method" value="EM"/>
    <property type="resolution" value="2.94 A"/>
    <property type="chains" value="G=1-401"/>
</dbReference>
<dbReference type="PDB" id="8FS5">
    <property type="method" value="EM"/>
    <property type="resolution" value="2.76 A"/>
    <property type="chains" value="G=1-401"/>
</dbReference>
<dbReference type="PDB" id="8FS6">
    <property type="method" value="EM"/>
    <property type="resolution" value="2.90 A"/>
    <property type="chains" value="G=1-401"/>
</dbReference>
<dbReference type="PDB" id="8FS7">
    <property type="method" value="EM"/>
    <property type="resolution" value="2.85 A"/>
    <property type="chains" value="G=1-401"/>
</dbReference>
<dbReference type="PDB" id="8FS8">
    <property type="method" value="EM"/>
    <property type="resolution" value="3.04 A"/>
    <property type="chains" value="G=1-401"/>
</dbReference>
<dbReference type="PDBsum" id="7SGZ"/>
<dbReference type="PDBsum" id="7SH2"/>
<dbReference type="PDBsum" id="7ST9"/>
<dbReference type="PDBsum" id="7STB"/>
<dbReference type="PDBsum" id="8DQW"/>
<dbReference type="PDBsum" id="8FS3"/>
<dbReference type="PDBsum" id="8FS4"/>
<dbReference type="PDBsum" id="8FS5"/>
<dbReference type="PDBsum" id="8FS6"/>
<dbReference type="PDBsum" id="8FS7"/>
<dbReference type="PDBsum" id="8FS8"/>
<dbReference type="EMDB" id="EMD-25121"/>
<dbReference type="EMDB" id="EMD-25122"/>
<dbReference type="EMDB" id="EMD-25422"/>
<dbReference type="EMDB" id="EMD-25423"/>
<dbReference type="SMR" id="P48581"/>
<dbReference type="BioGRID" id="34751">
    <property type="interactions" value="238"/>
</dbReference>
<dbReference type="ComplexPortal" id="CPX-1806">
    <property type="entry name" value="Rad17-Mec3-Ddc1 checkpoint clamp complex"/>
</dbReference>
<dbReference type="DIP" id="DIP-1546N"/>
<dbReference type="FunCoup" id="P48581">
    <property type="interactions" value="253"/>
</dbReference>
<dbReference type="IntAct" id="P48581">
    <property type="interactions" value="7"/>
</dbReference>
<dbReference type="MINT" id="P48581"/>
<dbReference type="STRING" id="4932.YOR368W"/>
<dbReference type="CarbonylDB" id="P48581"/>
<dbReference type="iPTMnet" id="P48581"/>
<dbReference type="PaxDb" id="4932-YOR368W"/>
<dbReference type="PeptideAtlas" id="P48581"/>
<dbReference type="EnsemblFungi" id="YOR368W_mRNA">
    <property type="protein sequence ID" value="YOR368W"/>
    <property type="gene ID" value="YOR368W"/>
</dbReference>
<dbReference type="GeneID" id="854550"/>
<dbReference type="KEGG" id="sce:YOR368W"/>
<dbReference type="AGR" id="SGD:S000005895"/>
<dbReference type="SGD" id="S000005895">
    <property type="gene designation" value="RAD17"/>
</dbReference>
<dbReference type="VEuPathDB" id="FungiDB:YOR368W"/>
<dbReference type="eggNOG" id="KOG3194">
    <property type="taxonomic scope" value="Eukaryota"/>
</dbReference>
<dbReference type="GeneTree" id="ENSGT00500000044913"/>
<dbReference type="HOGENOM" id="CLU_057555_0_0_1"/>
<dbReference type="InParanoid" id="P48581"/>
<dbReference type="OMA" id="VHLEHIT"/>
<dbReference type="OrthoDB" id="337581at2759"/>
<dbReference type="BioCyc" id="YEAST:G3O-33836-MONOMER"/>
<dbReference type="Reactome" id="R-SCE-176187">
    <property type="pathway name" value="Activation of ATR in response to replication stress"/>
</dbReference>
<dbReference type="BioGRID-ORCS" id="854550">
    <property type="hits" value="2 hits in 10 CRISPR screens"/>
</dbReference>
<dbReference type="ChiTaRS" id="RAD17">
    <property type="organism name" value="yeast"/>
</dbReference>
<dbReference type="PRO" id="PR:P48581"/>
<dbReference type="Proteomes" id="UP000002311">
    <property type="component" value="Chromosome XV"/>
</dbReference>
<dbReference type="RNAct" id="P48581">
    <property type="molecule type" value="protein"/>
</dbReference>
<dbReference type="GO" id="GO:0030896">
    <property type="term" value="C:checkpoint clamp complex"/>
    <property type="evidence" value="ECO:0000314"/>
    <property type="project" value="SGD"/>
</dbReference>
<dbReference type="GO" id="GO:0005634">
    <property type="term" value="C:nucleus"/>
    <property type="evidence" value="ECO:0000353"/>
    <property type="project" value="SGD"/>
</dbReference>
<dbReference type="GO" id="GO:0003684">
    <property type="term" value="F:damaged DNA binding"/>
    <property type="evidence" value="ECO:0007669"/>
    <property type="project" value="InterPro"/>
</dbReference>
<dbReference type="GO" id="GO:0003690">
    <property type="term" value="F:double-stranded DNA binding"/>
    <property type="evidence" value="ECO:0000314"/>
    <property type="project" value="SGD"/>
</dbReference>
<dbReference type="GO" id="GO:0004518">
    <property type="term" value="F:nuclease activity"/>
    <property type="evidence" value="ECO:0007669"/>
    <property type="project" value="UniProtKB-KW"/>
</dbReference>
<dbReference type="GO" id="GO:0000077">
    <property type="term" value="P:DNA damage checkpoint signaling"/>
    <property type="evidence" value="ECO:0000314"/>
    <property type="project" value="ComplexPortal"/>
</dbReference>
<dbReference type="GO" id="GO:0006281">
    <property type="term" value="P:DNA repair"/>
    <property type="evidence" value="ECO:0000318"/>
    <property type="project" value="GO_Central"/>
</dbReference>
<dbReference type="GO" id="GO:0006302">
    <property type="term" value="P:double-strand break repair"/>
    <property type="evidence" value="ECO:0000315"/>
    <property type="project" value="SGD"/>
</dbReference>
<dbReference type="GO" id="GO:0007131">
    <property type="term" value="P:reciprocal meiotic recombination"/>
    <property type="evidence" value="ECO:0000315"/>
    <property type="project" value="SGD"/>
</dbReference>
<dbReference type="FunFam" id="3.70.10.10:FF:000017">
    <property type="entry name" value="DNA damage checkpoint control protein RAD17"/>
    <property type="match status" value="1"/>
</dbReference>
<dbReference type="Gene3D" id="3.70.10.10">
    <property type="match status" value="1"/>
</dbReference>
<dbReference type="InterPro" id="IPR016587">
    <property type="entry name" value="Rad17"/>
</dbReference>
<dbReference type="InterPro" id="IPR003021">
    <property type="entry name" value="Rad1_Rec1_Rad17"/>
</dbReference>
<dbReference type="PANTHER" id="PTHR10870">
    <property type="entry name" value="CELL CYCLE CHECKPOINT PROTEIN RAD1"/>
    <property type="match status" value="1"/>
</dbReference>
<dbReference type="PANTHER" id="PTHR10870:SF0">
    <property type="entry name" value="CELL CYCLE CHECKPOINT PROTEIN RAD1"/>
    <property type="match status" value="1"/>
</dbReference>
<dbReference type="Pfam" id="PF02144">
    <property type="entry name" value="Rad1"/>
    <property type="match status" value="1"/>
</dbReference>
<dbReference type="PIRSF" id="PIRSF011769">
    <property type="entry name" value="Cell_cycle_RAD17"/>
    <property type="match status" value="1"/>
</dbReference>
<dbReference type="PRINTS" id="PR01245">
    <property type="entry name" value="RAD1REC1"/>
</dbReference>
<reference key="1">
    <citation type="journal article" date="1996" name="Nucleic Acids Res.">
        <title>Cloning and characterization of RAD17, a gene controlling cell cycle responses to DNA damage in Saccharomyces cerevisiae.</title>
        <authorList>
            <person name="Siede W."/>
            <person name="Nusspaumer G."/>
            <person name="Portillo V."/>
            <person name="Rodriguez R."/>
            <person name="Friedberg E.C."/>
        </authorList>
    </citation>
    <scope>NUCLEOTIDE SEQUENCE [GENOMIC DNA]</scope>
    <scope>FUNCTION</scope>
    <scope>MUTAGENESIS OF GLU-128</scope>
</reference>
<reference key="2">
    <citation type="journal article" date="1995" name="Science">
        <title>Yeast checkpoint genes in DNA damage processing: implications for repair and arrest.</title>
        <authorList>
            <person name="Lydall D."/>
            <person name="Weinert T.A."/>
        </authorList>
    </citation>
    <scope>NUCLEOTIDE SEQUENCE [GENOMIC DNA]</scope>
    <scope>FUNCTION</scope>
</reference>
<reference key="3">
    <citation type="journal article" date="1997" name="Nature">
        <title>The nucleotide sequence of Saccharomyces cerevisiae chromosome XV.</title>
        <authorList>
            <person name="Dujon B."/>
            <person name="Albermann K."/>
            <person name="Aldea M."/>
            <person name="Alexandraki D."/>
            <person name="Ansorge W."/>
            <person name="Arino J."/>
            <person name="Benes V."/>
            <person name="Bohn C."/>
            <person name="Bolotin-Fukuhara M."/>
            <person name="Bordonne R."/>
            <person name="Boyer J."/>
            <person name="Camasses A."/>
            <person name="Casamayor A."/>
            <person name="Casas C."/>
            <person name="Cheret G."/>
            <person name="Cziepluch C."/>
            <person name="Daignan-Fornier B."/>
            <person name="Dang V.-D."/>
            <person name="de Haan M."/>
            <person name="Delius H."/>
            <person name="Durand P."/>
            <person name="Fairhead C."/>
            <person name="Feldmann H."/>
            <person name="Gaillon L."/>
            <person name="Galisson F."/>
            <person name="Gamo F.-J."/>
            <person name="Gancedo C."/>
            <person name="Goffeau A."/>
            <person name="Goulding S.E."/>
            <person name="Grivell L.A."/>
            <person name="Habbig B."/>
            <person name="Hand N.J."/>
            <person name="Hani J."/>
            <person name="Hattenhorst U."/>
            <person name="Hebling U."/>
            <person name="Hernando Y."/>
            <person name="Herrero E."/>
            <person name="Heumann K."/>
            <person name="Hiesel R."/>
            <person name="Hilger F."/>
            <person name="Hofmann B."/>
            <person name="Hollenberg C.P."/>
            <person name="Hughes B."/>
            <person name="Jauniaux J.-C."/>
            <person name="Kalogeropoulos A."/>
            <person name="Katsoulou C."/>
            <person name="Kordes E."/>
            <person name="Lafuente M.J."/>
            <person name="Landt O."/>
            <person name="Louis E.J."/>
            <person name="Maarse A.C."/>
            <person name="Madania A."/>
            <person name="Mannhaupt G."/>
            <person name="Marck C."/>
            <person name="Martin R.P."/>
            <person name="Mewes H.-W."/>
            <person name="Michaux G."/>
            <person name="Paces V."/>
            <person name="Parle-McDermott A.G."/>
            <person name="Pearson B.M."/>
            <person name="Perrin A."/>
            <person name="Pettersson B."/>
            <person name="Poch O."/>
            <person name="Pohl T.M."/>
            <person name="Poirey R."/>
            <person name="Portetelle D."/>
            <person name="Pujol A."/>
            <person name="Purnelle B."/>
            <person name="Ramezani Rad M."/>
            <person name="Rechmann S."/>
            <person name="Schwager C."/>
            <person name="Schweizer M."/>
            <person name="Sor F."/>
            <person name="Sterky F."/>
            <person name="Tarassov I.A."/>
            <person name="Teodoru C."/>
            <person name="Tettelin H."/>
            <person name="Thierry A."/>
            <person name="Tobiasch E."/>
            <person name="Tzermia M."/>
            <person name="Uhlen M."/>
            <person name="Unseld M."/>
            <person name="Valens M."/>
            <person name="Vandenbol M."/>
            <person name="Vetter I."/>
            <person name="Vlcek C."/>
            <person name="Voet M."/>
            <person name="Volckaert G."/>
            <person name="Voss H."/>
            <person name="Wambutt R."/>
            <person name="Wedler H."/>
            <person name="Wiemann S."/>
            <person name="Winsor B."/>
            <person name="Wolfe K.H."/>
            <person name="Zollner A."/>
            <person name="Zumstein E."/>
            <person name="Kleine K."/>
        </authorList>
    </citation>
    <scope>NUCLEOTIDE SEQUENCE [LARGE SCALE GENOMIC DNA]</scope>
    <source>
        <strain>ATCC 204508 / S288c</strain>
    </source>
</reference>
<reference key="4">
    <citation type="journal article" date="2014" name="G3 (Bethesda)">
        <title>The reference genome sequence of Saccharomyces cerevisiae: Then and now.</title>
        <authorList>
            <person name="Engel S.R."/>
            <person name="Dietrich F.S."/>
            <person name="Fisk D.G."/>
            <person name="Binkley G."/>
            <person name="Balakrishnan R."/>
            <person name="Costanzo M.C."/>
            <person name="Dwight S.S."/>
            <person name="Hitz B.C."/>
            <person name="Karra K."/>
            <person name="Nash R.S."/>
            <person name="Weng S."/>
            <person name="Wong E.D."/>
            <person name="Lloyd P."/>
            <person name="Skrzypek M.S."/>
            <person name="Miyasato S.R."/>
            <person name="Simison M."/>
            <person name="Cherry J.M."/>
        </authorList>
    </citation>
    <scope>GENOME REANNOTATION</scope>
    <source>
        <strain>ATCC 204508 / S288c</strain>
    </source>
</reference>
<reference key="5">
    <citation type="journal article" date="2002" name="Proc. Natl. Acad. Sci. U.S.A.">
        <title>A dominant-negative MEC3 mutant uncovers new functions for the Rad17 complex and Tel1.</title>
        <authorList>
            <person name="Giannattasio M."/>
            <person name="Sommariva E."/>
            <person name="Vercillo R."/>
            <person name="Lippi-Boncambi F."/>
            <person name="Liberi G."/>
            <person name="Foiani M."/>
            <person name="Plevani P."/>
            <person name="Muzi-Falconi M."/>
        </authorList>
    </citation>
    <scope>FUNCTION OF THE CHECKPOINT CLAMP COMPLEX</scope>
</reference>
<reference key="6">
    <citation type="journal article" date="2003" name="Proc. Natl. Acad. Sci. U.S.A.">
        <title>Yeast Rad17/Mec3/Ddc1: a sliding clamp for the DNA damage checkpoint.</title>
        <authorList>
            <person name="Majka J."/>
            <person name="Burgers P.M.J."/>
        </authorList>
    </citation>
    <scope>INTERACTION OF THE CHECKPOINT CLAMP COMPLEX WITH THE RFC-RAD24 CHECKPOINT CLAMP LOADER COMPLEX</scope>
    <scope>FUNCTION OF THE CHECKPOINT CLAMP COMPLEX</scope>
    <scope>LACK OF EXONUCLEASE ACTIVITY</scope>
</reference>
<reference key="7">
    <citation type="journal article" date="1999" name="Mol. Cell. Biol.">
        <title>Role of a complex containing Rad17, Mec3, and Ddc1 in the yeast DNA damage checkpoint pathway.</title>
        <authorList>
            <person name="Kondo T."/>
            <person name="Matsumoto K."/>
            <person name="Sugimoto K."/>
        </authorList>
    </citation>
    <scope>IDENTIFICATION IN THE CHECKPOINT CLAMP COMPLEX</scope>
    <scope>FUNCTION OF THE CHECKPOINT CLAMP COMPLEX</scope>
</reference>
<reference key="8">
    <citation type="journal article" date="2003" name="J. Biol. Chem.">
        <title>Correlation between checkpoint activation and in vivo assembly of the yeast checkpoint complex Rad17-Mec3-Ddc1.</title>
        <authorList>
            <person name="Giannattasio M."/>
            <person name="Sabbioneda S."/>
            <person name="Minuzzo M."/>
            <person name="Plevani P."/>
            <person name="Muzi-Falconi M."/>
        </authorList>
    </citation>
    <scope>IDENTIFICATION IN THE CHECKPOINT CLAMP COMPLEX</scope>
    <scope>FUNCTION OF THE CHECKPOINT CLAMP COMPLEX</scope>
</reference>
<reference key="9">
    <citation type="journal article" date="2003" name="Nature">
        <title>Global analysis of protein expression in yeast.</title>
        <authorList>
            <person name="Ghaemmaghami S."/>
            <person name="Huh W.-K."/>
            <person name="Bower K."/>
            <person name="Howson R.W."/>
            <person name="Belle A."/>
            <person name="Dephoure N."/>
            <person name="O'Shea E.K."/>
            <person name="Weissman J.S."/>
        </authorList>
    </citation>
    <scope>LEVEL OF PROTEIN EXPRESSION [LARGE SCALE ANALYSIS]</scope>
</reference>
<reference key="10">
    <citation type="journal article" date="2004" name="J. Biol. Chem.">
        <title>Requirement for ATP by the DNA damage checkpoint clamp loader.</title>
        <authorList>
            <person name="Majka J."/>
            <person name="Chung B.Y."/>
            <person name="Burgers P.M.J."/>
        </authorList>
    </citation>
    <scope>INTERACTION OF THE CHECKPOINT CLAMP COMPLEX WITH THE RFC-RAD24 CHECKPOINT CLAMP LOADER COMPLEX</scope>
</reference>
<reference key="11">
    <citation type="journal article" date="2005" name="DNA Repair">
        <title>Function of Rad17/Mec3/Ddc1 and its partial complexes in the DNA damage checkpoint.</title>
        <authorList>
            <person name="Majka J."/>
            <person name="Burgers P.M.J."/>
        </authorList>
    </citation>
    <scope>IDENTIFICATION IN THE CHECKPOINT CLAMP COMPLEX</scope>
    <scope>FUNCTION OF THE CHECKPOINT CLAMP COMPLEX</scope>
</reference>
<reference key="12">
    <citation type="journal article" date="2005" name="J. Biol. Chem.">
        <title>The 9-1-1 checkpoint clamp physically interacts with polzeta and is partially required for spontaneous polzeta-dependent mutagenesis in Saccharomyces cerevisiae.</title>
        <authorList>
            <person name="Sabbioneda S."/>
            <person name="Minesinger B.K."/>
            <person name="Giannattasio M."/>
            <person name="Plevani P."/>
            <person name="Muzi-Falconi M."/>
            <person name="Jinks-Robertson S."/>
        </authorList>
    </citation>
    <scope>INTERACTION WITH REV7</scope>
    <scope>FUNCTION OF THE CHECKPOINT CLAMP COMPLEX</scope>
</reference>
<reference key="13">
    <citation type="journal article" date="2006" name="DNA Repair">
        <title>Psoralen-sensitive mutant pso9-1 of Saccharomyces cerevisiae contains a mutant allele of the DNA damage checkpoint gene MEC3.</title>
        <authorList>
            <person name="Cardone J.M."/>
            <person name="Revers L.F."/>
            <person name="Machado R.M."/>
            <person name="Bonatto D."/>
            <person name="Brendel M."/>
            <person name="Henriques J.A.P."/>
        </authorList>
    </citation>
    <scope>INTERACTION WITH DDC1 AND MEC3</scope>
</reference>
<reference key="14">
    <citation type="journal article" date="2007" name="Proc. Natl. Acad. Sci. U.S.A.">
        <title>Analysis of phosphorylation sites on proteins from Saccharomyces cerevisiae by electron transfer dissociation (ETD) mass spectrometry.</title>
        <authorList>
            <person name="Chi A."/>
            <person name="Huttenhower C."/>
            <person name="Geer L.Y."/>
            <person name="Coon J.J."/>
            <person name="Syka J.E.P."/>
            <person name="Bai D.L."/>
            <person name="Shabanowitz J."/>
            <person name="Burke D.J."/>
            <person name="Troyanskaya O.G."/>
            <person name="Hunt D.F."/>
        </authorList>
    </citation>
    <scope>PHOSPHORYLATION [LARGE SCALE ANALYSIS] AT SER-383</scope>
    <scope>IDENTIFICATION BY MASS SPECTROMETRY [LARGE SCALE ANALYSIS]</scope>
</reference>
<reference key="15">
    <citation type="journal article" date="2008" name="Mol. Cell. Proteomics">
        <title>A multidimensional chromatography technology for in-depth phosphoproteome analysis.</title>
        <authorList>
            <person name="Albuquerque C.P."/>
            <person name="Smolka M.B."/>
            <person name="Payne S.H."/>
            <person name="Bafna V."/>
            <person name="Eng J."/>
            <person name="Zhou H."/>
        </authorList>
    </citation>
    <scope>IDENTIFICATION BY MASS SPECTROMETRY [LARGE SCALE ANALYSIS]</scope>
</reference>
<evidence type="ECO:0000256" key="1">
    <source>
        <dbReference type="SAM" id="MobiDB-lite"/>
    </source>
</evidence>
<evidence type="ECO:0000269" key="2">
    <source>
    </source>
</evidence>
<evidence type="ECO:0000269" key="3">
    <source>
    </source>
</evidence>
<evidence type="ECO:0000269" key="4">
    <source>
    </source>
</evidence>
<evidence type="ECO:0000269" key="5">
    <source>
    </source>
</evidence>
<evidence type="ECO:0000269" key="6">
    <source>
    </source>
</evidence>
<evidence type="ECO:0000269" key="7">
    <source>
    </source>
</evidence>
<evidence type="ECO:0000269" key="8">
    <source>
    </source>
</evidence>
<evidence type="ECO:0000269" key="9">
    <source>
    </source>
</evidence>
<evidence type="ECO:0000269" key="10">
    <source>
    </source>
</evidence>
<evidence type="ECO:0000269" key="11">
    <source>
    </source>
</evidence>
<evidence type="ECO:0000269" key="12">
    <source>
    </source>
</evidence>
<evidence type="ECO:0000305" key="13"/>
<evidence type="ECO:0007744" key="14">
    <source>
    </source>
</evidence>
<evidence type="ECO:0007829" key="15">
    <source>
        <dbReference type="PDB" id="7SGZ"/>
    </source>
</evidence>
<evidence type="ECO:0007829" key="16">
    <source>
        <dbReference type="PDB" id="7SH2"/>
    </source>
</evidence>
<evidence type="ECO:0007829" key="17">
    <source>
        <dbReference type="PDB" id="7STB"/>
    </source>
</evidence>
<evidence type="ECO:0007829" key="18">
    <source>
        <dbReference type="PDB" id="8DQW"/>
    </source>
</evidence>
<evidence type="ECO:0007829" key="19">
    <source>
        <dbReference type="PDB" id="8FS7"/>
    </source>
</evidence>
<organism>
    <name type="scientific">Saccharomyces cerevisiae (strain ATCC 204508 / S288c)</name>
    <name type="common">Baker's yeast</name>
    <dbReference type="NCBI Taxonomy" id="559292"/>
    <lineage>
        <taxon>Eukaryota</taxon>
        <taxon>Fungi</taxon>
        <taxon>Dikarya</taxon>
        <taxon>Ascomycota</taxon>
        <taxon>Saccharomycotina</taxon>
        <taxon>Saccharomycetes</taxon>
        <taxon>Saccharomycetales</taxon>
        <taxon>Saccharomycetaceae</taxon>
        <taxon>Saccharomyces</taxon>
    </lineage>
</organism>
<sequence>MRINSELANKFSASTVHLEHITTALSCLTPFGSKDDVLIFIDADGLSFVRENNHVIKIQLLLSRELFMSYSYRNETEDHMKLCVKINHILDSVSVMNRNSDDIVECTLSYDGHGSPFVLIFEDSFISERVEYSTYLIKDFDTNGLELDRERISFEAIIKGEALHSALKDLKEIGCKECYVYAKTEANDENVFALISKSQLGFSKIKLPSNRSILEKLQVFDGDSTTVIDGFAVIGFFDFTSFDKIRKSTKIASKVLFRMDVHGVLSVNILSQTDDVIITDTTRPSNNRPGSIRQLQLPKDYPGIVIEVCMLEKESIDEAAQTEIELLMETNELGNRNSFKKSTIRKRYGTDKGNETSNDNLLQLNGKKIKLPSEEENNKNRESEDEENHCKYPTKDIPIFF</sequence>
<protein>
    <recommendedName>
        <fullName>DNA damage checkpoint control protein RAD17</fullName>
    </recommendedName>
    <alternativeName>
        <fullName>DNA repair exonuclease RAD17</fullName>
    </alternativeName>
</protein>
<comment type="function">
    <text evidence="2 3 4 7 8 10 11 12">Component of the checkpoint clamp complex involved in the surveillance mechanism that allows the DNA repair pathways to act to restore the integrity of the DNA prior to DNA synthesis or separation of the replicated chromosomes. Associates with sites of DNA damage and modulates the MEC1 signaling pathway and the activation of RAD53 in response to DNA damage at phase G1. The complex also physically regulates DNA polymerase zeta-dependent mutagenesis by controlling the access of polymerase zeta to damaged DNA. Contrary to its human counterpart, the 9-1-1 complex, the checkpoint clamp complex shows no detectable exonuclease activity.</text>
</comment>
<comment type="subunit">
    <text evidence="3 4 6 7 8 9 12">Component of the checkpoint clamp complex composed of DDC1, MEC3 and RAD17. The interaction with MEC3 is performed in a RAD17-dependent manner. The checkpoint clamp complex loads onto DNA. Interacts with the DNA polymerase zeta subunit REV7. 2 RAD17 subunits also form a heterotrimer with one MEC3 subunit.</text>
</comment>
<comment type="interaction">
    <interactant intactId="EBI-14652">
        <id>P48581</id>
    </interactant>
    <interactant intactId="EBI-30769">
        <id>Q08949</id>
        <label>DDC1</label>
    </interactant>
    <organismsDiffer>false</organismsDiffer>
    <experiments>4</experiments>
</comment>
<comment type="interaction">
    <interactant intactId="EBI-14652">
        <id>P48581</id>
    </interactant>
    <interactant intactId="EBI-10658">
        <id>Q02574</id>
        <label>MEC3</label>
    </interactant>
    <organismsDiffer>false</organismsDiffer>
    <experiments>11</experiments>
</comment>
<comment type="subcellular location">
    <subcellularLocation>
        <location evidence="13">Nucleus</location>
    </subcellularLocation>
</comment>
<comment type="miscellaneous">
    <text evidence="5">Present with 189 molecules/cell in log phase SD medium.</text>
</comment>
<comment type="similarity">
    <text evidence="13">Belongs to the rad1 family.</text>
</comment>
<proteinExistence type="evidence at protein level"/>
<accession>P48581</accession>
<accession>D6W361</accession>
<name>RAD17_YEAST</name>
<keyword id="KW-0002">3D-structure</keyword>
<keyword id="KW-0227">DNA damage</keyword>
<keyword id="KW-0234">DNA repair</keyword>
<keyword id="KW-0238">DNA-binding</keyword>
<keyword id="KW-0378">Hydrolase</keyword>
<keyword id="KW-0540">Nuclease</keyword>
<keyword id="KW-0539">Nucleus</keyword>
<keyword id="KW-0597">Phosphoprotein</keyword>
<keyword id="KW-1185">Reference proteome</keyword>
<feature type="chain" id="PRO_0000097150" description="DNA damage checkpoint control protein RAD17">
    <location>
        <begin position="1"/>
        <end position="401"/>
    </location>
</feature>
<feature type="region of interest" description="Disordered" evidence="1">
    <location>
        <begin position="367"/>
        <end position="393"/>
    </location>
</feature>
<feature type="compositionally biased region" description="Basic and acidic residues" evidence="1">
    <location>
        <begin position="371"/>
        <end position="393"/>
    </location>
</feature>
<feature type="modified residue" description="Phosphoserine" evidence="14">
    <location>
        <position position="383"/>
    </location>
</feature>
<feature type="mutagenesis site" description="In RAD17-1; UV-sensitive." evidence="11">
    <original>E</original>
    <variation>K</variation>
    <location>
        <position position="128"/>
    </location>
</feature>
<feature type="strand" evidence="18">
    <location>
        <begin position="9"/>
        <end position="16"/>
    </location>
</feature>
<feature type="helix" evidence="18">
    <location>
        <begin position="19"/>
        <end position="28"/>
    </location>
</feature>
<feature type="helix" evidence="18">
    <location>
        <begin position="29"/>
        <end position="31"/>
    </location>
</feature>
<feature type="strand" evidence="18">
    <location>
        <begin position="33"/>
        <end position="42"/>
    </location>
</feature>
<feature type="strand" evidence="18">
    <location>
        <begin position="45"/>
        <end position="52"/>
    </location>
</feature>
<feature type="turn" evidence="18">
    <location>
        <begin position="53"/>
        <end position="55"/>
    </location>
</feature>
<feature type="strand" evidence="18">
    <location>
        <begin position="56"/>
        <end position="63"/>
    </location>
</feature>
<feature type="helix" evidence="18">
    <location>
        <begin position="64"/>
        <end position="66"/>
    </location>
</feature>
<feature type="strand" evidence="18">
    <location>
        <begin position="67"/>
        <end position="72"/>
    </location>
</feature>
<feature type="strand" evidence="18">
    <location>
        <begin position="78"/>
        <end position="85"/>
    </location>
</feature>
<feature type="helix" evidence="18">
    <location>
        <begin position="86"/>
        <end position="96"/>
    </location>
</feature>
<feature type="helix" evidence="18">
    <location>
        <begin position="97"/>
        <end position="99"/>
    </location>
</feature>
<feature type="turn" evidence="18">
    <location>
        <begin position="100"/>
        <end position="102"/>
    </location>
</feature>
<feature type="strand" evidence="18">
    <location>
        <begin position="105"/>
        <end position="110"/>
    </location>
</feature>
<feature type="strand" evidence="15">
    <location>
        <begin position="112"/>
        <end position="115"/>
    </location>
</feature>
<feature type="strand" evidence="18">
    <location>
        <begin position="117"/>
        <end position="122"/>
    </location>
</feature>
<feature type="strand" evidence="18">
    <location>
        <begin position="124"/>
        <end position="132"/>
    </location>
</feature>
<feature type="helix" evidence="18">
    <location>
        <begin position="142"/>
        <end position="144"/>
    </location>
</feature>
<feature type="helix" evidence="15">
    <location>
        <begin position="149"/>
        <end position="151"/>
    </location>
</feature>
<feature type="strand" evidence="18">
    <location>
        <begin position="152"/>
        <end position="159"/>
    </location>
</feature>
<feature type="helix" evidence="18">
    <location>
        <begin position="160"/>
        <end position="172"/>
    </location>
</feature>
<feature type="strand" evidence="18">
    <location>
        <begin position="177"/>
        <end position="184"/>
    </location>
</feature>
<feature type="turn" evidence="17">
    <location>
        <begin position="186"/>
        <end position="188"/>
    </location>
</feature>
<feature type="strand" evidence="18">
    <location>
        <begin position="190"/>
        <end position="198"/>
    </location>
</feature>
<feature type="strand" evidence="18">
    <location>
        <begin position="201"/>
        <end position="207"/>
    </location>
</feature>
<feature type="turn" evidence="18">
    <location>
        <begin position="211"/>
        <end position="213"/>
    </location>
</feature>
<feature type="strand" evidence="18">
    <location>
        <begin position="214"/>
        <end position="219"/>
    </location>
</feature>
<feature type="strand" evidence="18">
    <location>
        <begin position="223"/>
        <end position="225"/>
    </location>
</feature>
<feature type="strand" evidence="16">
    <location>
        <begin position="227"/>
        <end position="230"/>
    </location>
</feature>
<feature type="strand" evidence="18">
    <location>
        <begin position="232"/>
        <end position="238"/>
    </location>
</feature>
<feature type="helix" evidence="18">
    <location>
        <begin position="239"/>
        <end position="242"/>
    </location>
</feature>
<feature type="helix" evidence="18">
    <location>
        <begin position="243"/>
        <end position="245"/>
    </location>
</feature>
<feature type="helix" evidence="18">
    <location>
        <begin position="246"/>
        <end position="251"/>
    </location>
</feature>
<feature type="strand" evidence="18">
    <location>
        <begin position="253"/>
        <end position="260"/>
    </location>
</feature>
<feature type="strand" evidence="18">
    <location>
        <begin position="263"/>
        <end position="270"/>
    </location>
</feature>
<feature type="strand" evidence="19">
    <location>
        <begin position="299"/>
        <end position="301"/>
    </location>
</feature>
<feature type="strand" evidence="18">
    <location>
        <begin position="305"/>
        <end position="311"/>
    </location>
</feature>
<feature type="strand" evidence="15">
    <location>
        <begin position="313"/>
        <end position="315"/>
    </location>
</feature>
<feature type="helix" evidence="18">
    <location>
        <begin position="318"/>
        <end position="328"/>
    </location>
</feature>
<gene>
    <name type="primary">RAD17</name>
    <name type="ordered locus">YOR368W</name>
</gene>